<organism>
    <name type="scientific">Rattus norvegicus</name>
    <name type="common">Rat</name>
    <dbReference type="NCBI Taxonomy" id="10116"/>
    <lineage>
        <taxon>Eukaryota</taxon>
        <taxon>Metazoa</taxon>
        <taxon>Chordata</taxon>
        <taxon>Craniata</taxon>
        <taxon>Vertebrata</taxon>
        <taxon>Euteleostomi</taxon>
        <taxon>Mammalia</taxon>
        <taxon>Eutheria</taxon>
        <taxon>Euarchontoglires</taxon>
        <taxon>Glires</taxon>
        <taxon>Rodentia</taxon>
        <taxon>Myomorpha</taxon>
        <taxon>Muroidea</taxon>
        <taxon>Muridae</taxon>
        <taxon>Murinae</taxon>
        <taxon>Rattus</taxon>
    </lineage>
</organism>
<keyword id="KW-0007">Acetylation</keyword>
<keyword id="KW-0010">Activator</keyword>
<keyword id="KW-0217">Developmental protein</keyword>
<keyword id="KW-0221">Differentiation</keyword>
<keyword id="KW-0238">DNA-binding</keyword>
<keyword id="KW-0524">Neurogenesis</keyword>
<keyword id="KW-0539">Nucleus</keyword>
<keyword id="KW-1185">Reference proteome</keyword>
<keyword id="KW-0804">Transcription</keyword>
<keyword id="KW-0805">Transcription regulation</keyword>
<protein>
    <recommendedName>
        <fullName>Achaete-scute homolog 1</fullName>
    </recommendedName>
</protein>
<proteinExistence type="evidence at transcript level"/>
<sequence>MESSGKMESGAGQQPQPPQPFLPPAACFFATAAAAAAAAAAAAAQSAQQQQQQQAPQQQAPQLSPVADGQPSGGGHKSAAKQVKRQRSSSPELMRCKRRLNFSGFGYSLPQQQPAAVARRNERERNRVKLVNLGFATLREHVPNGAANKKMSKVETLRSAVEYIRALQQLLDEHDAVSAAFQAGVLSPTISPNYSNDLNSMAGSPVSSYSSDEGSYDPLSPEEQELLDFTNWF</sequence>
<feature type="chain" id="PRO_0000127128" description="Achaete-scute homolog 1">
    <location>
        <begin position="1"/>
        <end position="233"/>
    </location>
</feature>
<feature type="domain" description="bHLH" evidence="3">
    <location>
        <begin position="115"/>
        <end position="167"/>
    </location>
</feature>
<feature type="region of interest" description="Disordered" evidence="4">
    <location>
        <begin position="1"/>
        <end position="24"/>
    </location>
</feature>
<feature type="region of interest" description="Disordered" evidence="4">
    <location>
        <begin position="39"/>
        <end position="95"/>
    </location>
</feature>
<feature type="compositionally biased region" description="Low complexity" evidence="4">
    <location>
        <begin position="39"/>
        <end position="62"/>
    </location>
</feature>
<feature type="compositionally biased region" description="Basic residues" evidence="4">
    <location>
        <begin position="78"/>
        <end position="87"/>
    </location>
</feature>
<feature type="modified residue" description="N6-acetyllysine" evidence="2">
    <location>
        <position position="153"/>
    </location>
</feature>
<dbReference type="EMBL" id="X53725">
    <property type="protein sequence ID" value="CAA37760.1"/>
    <property type="molecule type" value="mRNA"/>
</dbReference>
<dbReference type="PIR" id="S11563">
    <property type="entry name" value="S11563"/>
</dbReference>
<dbReference type="RefSeq" id="NP_071779.1">
    <property type="nucleotide sequence ID" value="NM_022384.2"/>
</dbReference>
<dbReference type="SMR" id="P19359"/>
<dbReference type="FunCoup" id="P19359">
    <property type="interactions" value="85"/>
</dbReference>
<dbReference type="IntAct" id="P19359">
    <property type="interactions" value="1"/>
</dbReference>
<dbReference type="MINT" id="P19359"/>
<dbReference type="STRING" id="10116.ENSRNOP00000005674"/>
<dbReference type="PhosphoSitePlus" id="P19359"/>
<dbReference type="PaxDb" id="10116-ENSRNOP00000005674"/>
<dbReference type="Ensembl" id="ENSRNOT00000005674.6">
    <property type="protein sequence ID" value="ENSRNOP00000005674.2"/>
    <property type="gene ID" value="ENSRNOG00000004294.6"/>
</dbReference>
<dbReference type="GeneID" id="64186"/>
<dbReference type="KEGG" id="rno:64186"/>
<dbReference type="UCSC" id="RGD:71010">
    <property type="organism name" value="rat"/>
</dbReference>
<dbReference type="AGR" id="RGD:71010"/>
<dbReference type="CTD" id="429"/>
<dbReference type="RGD" id="71010">
    <property type="gene designation" value="Ascl1"/>
</dbReference>
<dbReference type="eggNOG" id="KOG4029">
    <property type="taxonomic scope" value="Eukaryota"/>
</dbReference>
<dbReference type="GeneTree" id="ENSGT00940000162483"/>
<dbReference type="HOGENOM" id="CLU_063523_3_0_1"/>
<dbReference type="InParanoid" id="P19359"/>
<dbReference type="OMA" id="QPAACFF"/>
<dbReference type="OrthoDB" id="5976910at2759"/>
<dbReference type="PhylomeDB" id="P19359"/>
<dbReference type="TreeFam" id="TF322889"/>
<dbReference type="PRO" id="PR:P19359"/>
<dbReference type="Proteomes" id="UP000002494">
    <property type="component" value="Chromosome 7"/>
</dbReference>
<dbReference type="Bgee" id="ENSRNOG00000004294">
    <property type="expression patterns" value="Expressed in thymus and 6 other cell types or tissues"/>
</dbReference>
<dbReference type="GO" id="GO:0043025">
    <property type="term" value="C:neuronal cell body"/>
    <property type="evidence" value="ECO:0000266"/>
    <property type="project" value="RGD"/>
</dbReference>
<dbReference type="GO" id="GO:0005654">
    <property type="term" value="C:nucleoplasm"/>
    <property type="evidence" value="ECO:0000304"/>
    <property type="project" value="Reactome"/>
</dbReference>
<dbReference type="GO" id="GO:0005634">
    <property type="term" value="C:nucleus"/>
    <property type="evidence" value="ECO:0000266"/>
    <property type="project" value="RGD"/>
</dbReference>
<dbReference type="GO" id="GO:0090575">
    <property type="term" value="C:RNA polymerase II transcription regulator complex"/>
    <property type="evidence" value="ECO:0000318"/>
    <property type="project" value="GO_Central"/>
</dbReference>
<dbReference type="GO" id="GO:0043425">
    <property type="term" value="F:bHLH transcription factor binding"/>
    <property type="evidence" value="ECO:0000266"/>
    <property type="project" value="RGD"/>
</dbReference>
<dbReference type="GO" id="GO:0003682">
    <property type="term" value="F:chromatin binding"/>
    <property type="evidence" value="ECO:0000266"/>
    <property type="project" value="RGD"/>
</dbReference>
<dbReference type="GO" id="GO:0003700">
    <property type="term" value="F:DNA-binding transcription factor activity"/>
    <property type="evidence" value="ECO:0000250"/>
    <property type="project" value="UniProtKB"/>
</dbReference>
<dbReference type="GO" id="GO:0000981">
    <property type="term" value="F:DNA-binding transcription factor activity, RNA polymerase II-specific"/>
    <property type="evidence" value="ECO:0000318"/>
    <property type="project" value="GO_Central"/>
</dbReference>
<dbReference type="GO" id="GO:0001227">
    <property type="term" value="F:DNA-binding transcription repressor activity, RNA polymerase II-specific"/>
    <property type="evidence" value="ECO:0000266"/>
    <property type="project" value="RGD"/>
</dbReference>
<dbReference type="GO" id="GO:0003690">
    <property type="term" value="F:double-stranded DNA binding"/>
    <property type="evidence" value="ECO:0000314"/>
    <property type="project" value="RGD"/>
</dbReference>
<dbReference type="GO" id="GO:0070888">
    <property type="term" value="F:E-box binding"/>
    <property type="evidence" value="ECO:0000266"/>
    <property type="project" value="RGD"/>
</dbReference>
<dbReference type="GO" id="GO:0042802">
    <property type="term" value="F:identical protein binding"/>
    <property type="evidence" value="ECO:0000353"/>
    <property type="project" value="RGD"/>
</dbReference>
<dbReference type="GO" id="GO:0003676">
    <property type="term" value="F:nucleic acid binding"/>
    <property type="evidence" value="ECO:0000266"/>
    <property type="project" value="RGD"/>
</dbReference>
<dbReference type="GO" id="GO:0046983">
    <property type="term" value="F:protein dimerization activity"/>
    <property type="evidence" value="ECO:0007669"/>
    <property type="project" value="InterPro"/>
</dbReference>
<dbReference type="GO" id="GO:0000978">
    <property type="term" value="F:RNA polymerase II cis-regulatory region sequence-specific DNA binding"/>
    <property type="evidence" value="ECO:0000266"/>
    <property type="project" value="RGD"/>
</dbReference>
<dbReference type="GO" id="GO:0000977">
    <property type="term" value="F:RNA polymerase II transcription regulatory region sequence-specific DNA binding"/>
    <property type="evidence" value="ECO:0000318"/>
    <property type="project" value="GO_Central"/>
</dbReference>
<dbReference type="GO" id="GO:0043565">
    <property type="term" value="F:sequence-specific DNA binding"/>
    <property type="evidence" value="ECO:0000266"/>
    <property type="project" value="RGD"/>
</dbReference>
<dbReference type="GO" id="GO:1990837">
    <property type="term" value="F:sequence-specific double-stranded DNA binding"/>
    <property type="evidence" value="ECO:0000266"/>
    <property type="project" value="RGD"/>
</dbReference>
<dbReference type="GO" id="GO:0061104">
    <property type="term" value="P:adrenal chromaffin cell differentiation"/>
    <property type="evidence" value="ECO:0000266"/>
    <property type="project" value="RGD"/>
</dbReference>
<dbReference type="GO" id="GO:0061103">
    <property type="term" value="P:carotid body glomus cell differentiation"/>
    <property type="evidence" value="ECO:0000266"/>
    <property type="project" value="RGD"/>
</dbReference>
<dbReference type="GO" id="GO:0048469">
    <property type="term" value="P:cell maturation"/>
    <property type="evidence" value="ECO:0000266"/>
    <property type="project" value="RGD"/>
</dbReference>
<dbReference type="GO" id="GO:0071259">
    <property type="term" value="P:cellular response to magnetism"/>
    <property type="evidence" value="ECO:0000270"/>
    <property type="project" value="RGD"/>
</dbReference>
<dbReference type="GO" id="GO:0021954">
    <property type="term" value="P:central nervous system neuron development"/>
    <property type="evidence" value="ECO:0000266"/>
    <property type="project" value="RGD"/>
</dbReference>
<dbReference type="GO" id="GO:0021987">
    <property type="term" value="P:cerebral cortex development"/>
    <property type="evidence" value="ECO:0000266"/>
    <property type="project" value="RGD"/>
</dbReference>
<dbReference type="GO" id="GO:0021892">
    <property type="term" value="P:cerebral cortex GABAergic interneuron differentiation"/>
    <property type="evidence" value="ECO:0000266"/>
    <property type="project" value="RGD"/>
</dbReference>
<dbReference type="GO" id="GO:0021902">
    <property type="term" value="P:commitment of neuronal cell to specific neuron type in forebrain"/>
    <property type="evidence" value="ECO:0000266"/>
    <property type="project" value="RGD"/>
</dbReference>
<dbReference type="GO" id="GO:0021879">
    <property type="term" value="P:forebrain neuron differentiation"/>
    <property type="evidence" value="ECO:0000314"/>
    <property type="project" value="RGD"/>
</dbReference>
<dbReference type="GO" id="GO:0097154">
    <property type="term" value="P:GABAergic neuron differentiation"/>
    <property type="evidence" value="ECO:0000266"/>
    <property type="project" value="RGD"/>
</dbReference>
<dbReference type="GO" id="GO:0048699">
    <property type="term" value="P:generation of neurons"/>
    <property type="evidence" value="ECO:0000266"/>
    <property type="project" value="RGD"/>
</dbReference>
<dbReference type="GO" id="GO:0007507">
    <property type="term" value="P:heart development"/>
    <property type="evidence" value="ECO:0000270"/>
    <property type="project" value="RGD"/>
</dbReference>
<dbReference type="GO" id="GO:0061100">
    <property type="term" value="P:lung neuroendocrine cell differentiation"/>
    <property type="evidence" value="ECO:0000266"/>
    <property type="project" value="RGD"/>
</dbReference>
<dbReference type="GO" id="GO:0097475">
    <property type="term" value="P:motor neuron migration"/>
    <property type="evidence" value="ECO:0000266"/>
    <property type="project" value="RGD"/>
</dbReference>
<dbReference type="GO" id="GO:0050883">
    <property type="term" value="P:musculoskeletal movement, spinal reflex action"/>
    <property type="evidence" value="ECO:0000266"/>
    <property type="project" value="RGD"/>
</dbReference>
<dbReference type="GO" id="GO:0043066">
    <property type="term" value="P:negative regulation of apoptotic process"/>
    <property type="evidence" value="ECO:0000266"/>
    <property type="project" value="RGD"/>
</dbReference>
<dbReference type="GO" id="GO:0045892">
    <property type="term" value="P:negative regulation of DNA-templated transcription"/>
    <property type="evidence" value="ECO:0000266"/>
    <property type="project" value="RGD"/>
</dbReference>
<dbReference type="GO" id="GO:0045665">
    <property type="term" value="P:negative regulation of neuron differentiation"/>
    <property type="evidence" value="ECO:0000314"/>
    <property type="project" value="RGD"/>
</dbReference>
<dbReference type="GO" id="GO:0000122">
    <property type="term" value="P:negative regulation of transcription by RNA polymerase II"/>
    <property type="evidence" value="ECO:0000266"/>
    <property type="project" value="RGD"/>
</dbReference>
<dbReference type="GO" id="GO:0007399">
    <property type="term" value="P:nervous system development"/>
    <property type="evidence" value="ECO:0000314"/>
    <property type="project" value="RGD"/>
</dbReference>
<dbReference type="GO" id="GO:0061351">
    <property type="term" value="P:neural precursor cell proliferation"/>
    <property type="evidence" value="ECO:0000266"/>
    <property type="project" value="RGD"/>
</dbReference>
<dbReference type="GO" id="GO:0007400">
    <property type="term" value="P:neuroblast fate determination"/>
    <property type="evidence" value="ECO:0000266"/>
    <property type="project" value="RGD"/>
</dbReference>
<dbReference type="GO" id="GO:0007405">
    <property type="term" value="P:neuroblast proliferation"/>
    <property type="evidence" value="ECO:0000266"/>
    <property type="project" value="RGD"/>
</dbReference>
<dbReference type="GO" id="GO:0061101">
    <property type="term" value="P:neuroendocrine cell differentiation"/>
    <property type="evidence" value="ECO:0000266"/>
    <property type="project" value="RGD"/>
</dbReference>
<dbReference type="GO" id="GO:0022008">
    <property type="term" value="P:neurogenesis"/>
    <property type="evidence" value="ECO:0000266"/>
    <property type="project" value="RGD"/>
</dbReference>
<dbReference type="GO" id="GO:0048666">
    <property type="term" value="P:neuron development"/>
    <property type="evidence" value="ECO:0000250"/>
    <property type="project" value="UniProtKB"/>
</dbReference>
<dbReference type="GO" id="GO:0030182">
    <property type="term" value="P:neuron differentiation"/>
    <property type="evidence" value="ECO:0000266"/>
    <property type="project" value="RGD"/>
</dbReference>
<dbReference type="GO" id="GO:0048663">
    <property type="term" value="P:neuron fate commitment"/>
    <property type="evidence" value="ECO:0000250"/>
    <property type="project" value="UniProtKB"/>
</dbReference>
<dbReference type="GO" id="GO:0048665">
    <property type="term" value="P:neuron fate specification"/>
    <property type="evidence" value="ECO:0000250"/>
    <property type="project" value="UniProtKB"/>
</dbReference>
<dbReference type="GO" id="GO:0003358">
    <property type="term" value="P:noradrenergic neuron development"/>
    <property type="evidence" value="ECO:0000250"/>
    <property type="project" value="UniProtKB"/>
</dbReference>
<dbReference type="GO" id="GO:0003359">
    <property type="term" value="P:noradrenergic neuron fate commitment"/>
    <property type="evidence" value="ECO:0000266"/>
    <property type="project" value="RGD"/>
</dbReference>
<dbReference type="GO" id="GO:0007219">
    <property type="term" value="P:Notch signaling pathway"/>
    <property type="evidence" value="ECO:0000266"/>
    <property type="project" value="RGD"/>
</dbReference>
<dbReference type="GO" id="GO:0060166">
    <property type="term" value="P:olfactory pit development"/>
    <property type="evidence" value="ECO:0000266"/>
    <property type="project" value="RGD"/>
</dbReference>
<dbReference type="GO" id="GO:0021779">
    <property type="term" value="P:oligodendrocyte cell fate commitment"/>
    <property type="evidence" value="ECO:0000266"/>
    <property type="project" value="RGD"/>
</dbReference>
<dbReference type="GO" id="GO:0014003">
    <property type="term" value="P:oligodendrocyte development"/>
    <property type="evidence" value="ECO:0000266"/>
    <property type="project" value="RGD"/>
</dbReference>
<dbReference type="GO" id="GO:0048709">
    <property type="term" value="P:oligodendrocyte differentiation"/>
    <property type="evidence" value="ECO:0000266"/>
    <property type="project" value="RGD"/>
</dbReference>
<dbReference type="GO" id="GO:0007389">
    <property type="term" value="P:pattern specification process"/>
    <property type="evidence" value="ECO:0000266"/>
    <property type="project" value="RGD"/>
</dbReference>
<dbReference type="GO" id="GO:0048935">
    <property type="term" value="P:peripheral nervous system neuron development"/>
    <property type="evidence" value="ECO:0000266"/>
    <property type="project" value="RGD"/>
</dbReference>
<dbReference type="GO" id="GO:0045787">
    <property type="term" value="P:positive regulation of cell cycle"/>
    <property type="evidence" value="ECO:0000266"/>
    <property type="project" value="RGD"/>
</dbReference>
<dbReference type="GO" id="GO:2000179">
    <property type="term" value="P:positive regulation of neural precursor cell proliferation"/>
    <property type="evidence" value="ECO:0000266"/>
    <property type="project" value="RGD"/>
</dbReference>
<dbReference type="GO" id="GO:0050769">
    <property type="term" value="P:positive regulation of neurogenesis"/>
    <property type="evidence" value="ECO:0000266"/>
    <property type="project" value="RGD"/>
</dbReference>
<dbReference type="GO" id="GO:0043525">
    <property type="term" value="P:positive regulation of neuron apoptotic process"/>
    <property type="evidence" value="ECO:0000266"/>
    <property type="project" value="RGD"/>
</dbReference>
<dbReference type="GO" id="GO:0045666">
    <property type="term" value="P:positive regulation of neuron differentiation"/>
    <property type="evidence" value="ECO:0000314"/>
    <property type="project" value="UniProtKB"/>
</dbReference>
<dbReference type="GO" id="GO:0045747">
    <property type="term" value="P:positive regulation of Notch signaling pathway"/>
    <property type="evidence" value="ECO:0000266"/>
    <property type="project" value="RGD"/>
</dbReference>
<dbReference type="GO" id="GO:0045944">
    <property type="term" value="P:positive regulation of transcription by RNA polymerase II"/>
    <property type="evidence" value="ECO:0000266"/>
    <property type="project" value="RGD"/>
</dbReference>
<dbReference type="GO" id="GO:0042127">
    <property type="term" value="P:regulation of cell population proliferation"/>
    <property type="evidence" value="ECO:0000266"/>
    <property type="project" value="RGD"/>
</dbReference>
<dbReference type="GO" id="GO:0030856">
    <property type="term" value="P:regulation of epithelial cell differentiation"/>
    <property type="evidence" value="ECO:0000266"/>
    <property type="project" value="RGD"/>
</dbReference>
<dbReference type="GO" id="GO:0010468">
    <property type="term" value="P:regulation of gene expression"/>
    <property type="evidence" value="ECO:0000250"/>
    <property type="project" value="UniProtKB"/>
</dbReference>
<dbReference type="GO" id="GO:0007346">
    <property type="term" value="P:regulation of mitotic cell cycle"/>
    <property type="evidence" value="ECO:0000266"/>
    <property type="project" value="RGD"/>
</dbReference>
<dbReference type="GO" id="GO:0050767">
    <property type="term" value="P:regulation of neurogenesis"/>
    <property type="evidence" value="ECO:0000266"/>
    <property type="project" value="RGD"/>
</dbReference>
<dbReference type="GO" id="GO:0008593">
    <property type="term" value="P:regulation of Notch signaling pathway"/>
    <property type="evidence" value="ECO:0000266"/>
    <property type="project" value="RGD"/>
</dbReference>
<dbReference type="GO" id="GO:0060165">
    <property type="term" value="P:regulation of timing of subpallium neuron differentiation"/>
    <property type="evidence" value="ECO:0000266"/>
    <property type="project" value="RGD"/>
</dbReference>
<dbReference type="GO" id="GO:0006357">
    <property type="term" value="P:regulation of transcription by RNA polymerase II"/>
    <property type="evidence" value="ECO:0000250"/>
    <property type="project" value="UniProtKB"/>
</dbReference>
<dbReference type="GO" id="GO:0070849">
    <property type="term" value="P:response to epidermal growth factor"/>
    <property type="evidence" value="ECO:0000270"/>
    <property type="project" value="RGD"/>
</dbReference>
<dbReference type="GO" id="GO:0051593">
    <property type="term" value="P:response to folic acid"/>
    <property type="evidence" value="ECO:0000270"/>
    <property type="project" value="RGD"/>
</dbReference>
<dbReference type="GO" id="GO:0032526">
    <property type="term" value="P:response to retinoic acid"/>
    <property type="evidence" value="ECO:0000270"/>
    <property type="project" value="RGD"/>
</dbReference>
<dbReference type="GO" id="GO:0007423">
    <property type="term" value="P:sensory organ development"/>
    <property type="evidence" value="ECO:0000318"/>
    <property type="project" value="GO_Central"/>
</dbReference>
<dbReference type="GO" id="GO:0021527">
    <property type="term" value="P:spinal cord association neuron differentiation"/>
    <property type="evidence" value="ECO:0000266"/>
    <property type="project" value="RGD"/>
</dbReference>
<dbReference type="GO" id="GO:0021529">
    <property type="term" value="P:spinal cord oligodendrocyte cell differentiation"/>
    <property type="evidence" value="ECO:0000266"/>
    <property type="project" value="RGD"/>
</dbReference>
<dbReference type="GO" id="GO:0021530">
    <property type="term" value="P:spinal cord oligodendrocyte cell fate specification"/>
    <property type="evidence" value="ECO:0000266"/>
    <property type="project" value="RGD"/>
</dbReference>
<dbReference type="GO" id="GO:0061102">
    <property type="term" value="P:stomach neuroendocrine cell differentiation"/>
    <property type="evidence" value="ECO:0000266"/>
    <property type="project" value="RGD"/>
</dbReference>
<dbReference type="GO" id="GO:0060163">
    <property type="term" value="P:subpallium neuron fate commitment"/>
    <property type="evidence" value="ECO:0000266"/>
    <property type="project" value="RGD"/>
</dbReference>
<dbReference type="GO" id="GO:0061549">
    <property type="term" value="P:sympathetic ganglion development"/>
    <property type="evidence" value="ECO:0000250"/>
    <property type="project" value="UniProtKB"/>
</dbReference>
<dbReference type="GO" id="GO:0060579">
    <property type="term" value="P:ventral spinal cord interneuron fate commitment"/>
    <property type="evidence" value="ECO:0000250"/>
    <property type="project" value="UniProtKB"/>
</dbReference>
<dbReference type="GO" id="GO:0021750">
    <property type="term" value="P:vestibular nucleus development"/>
    <property type="evidence" value="ECO:0000266"/>
    <property type="project" value="RGD"/>
</dbReference>
<dbReference type="CDD" id="cd19742">
    <property type="entry name" value="bHLH_TS_ASCL1_Mash1"/>
    <property type="match status" value="1"/>
</dbReference>
<dbReference type="FunFam" id="4.10.280.10:FF:000029">
    <property type="entry name" value="Achaete-scute family bHLH transcription factor 1"/>
    <property type="match status" value="1"/>
</dbReference>
<dbReference type="Gene3D" id="4.10.280.10">
    <property type="entry name" value="Helix-loop-helix DNA-binding domain"/>
    <property type="match status" value="1"/>
</dbReference>
<dbReference type="InterPro" id="IPR011598">
    <property type="entry name" value="bHLH_dom"/>
</dbReference>
<dbReference type="InterPro" id="IPR036638">
    <property type="entry name" value="HLH_DNA-bd_sf"/>
</dbReference>
<dbReference type="InterPro" id="IPR015660">
    <property type="entry name" value="MASH1/Ascl1a-like"/>
</dbReference>
<dbReference type="PANTHER" id="PTHR13935:SF66">
    <property type="entry name" value="ACHAETE-SCUTE HOMOLOG 1"/>
    <property type="match status" value="1"/>
</dbReference>
<dbReference type="PANTHER" id="PTHR13935">
    <property type="entry name" value="ACHAETE-SCUTE TRANSCRIPTION FACTOR-RELATED"/>
    <property type="match status" value="1"/>
</dbReference>
<dbReference type="Pfam" id="PF00010">
    <property type="entry name" value="HLH"/>
    <property type="match status" value="1"/>
</dbReference>
<dbReference type="SMART" id="SM00353">
    <property type="entry name" value="HLH"/>
    <property type="match status" value="1"/>
</dbReference>
<dbReference type="SUPFAM" id="SSF47459">
    <property type="entry name" value="HLH, helix-loop-helix DNA-binding domain"/>
    <property type="match status" value="1"/>
</dbReference>
<dbReference type="PROSITE" id="PS50888">
    <property type="entry name" value="BHLH"/>
    <property type="match status" value="1"/>
</dbReference>
<comment type="function">
    <text evidence="2 5">Transcription factor that plays a key role in neuronal differentiation: acts as a pioneer transcription factor, accessing closed chromatin to allow other factors to bind and activate neural pathways (PubMed:10648228). Directly binds the E box motif (5'-CANNTG-3') on promoters and promotes transcription of neuronal genes. The combination of three transcription factors, ASCL1, POU3F2/BRN2 and MYT1L, is sufficient to reprogram fibroblasts and other somatic cells into induced neuronal (iN) cells in vitro. Plays a role at early stages of development of specific neural lineages in most regions of the CNS, and of several lineages in the PNS. Essential for the generation of olfactory and autonomic neurons. Acts synergistically with FOXN4 to specify the identity of V2b neurons rather than V2a from bipotential p2 progenitors during spinal cord neurogenesis, probably through DLL4-NOTCH signaling activation. Involved in the regulation of neuroendocrine cell development in the glandular stomach (By similarity).</text>
</comment>
<comment type="subunit">
    <text evidence="1">Efficient DNA binding requires dimerization with another bHLH protein. Forms a heterodimer with TCF3.</text>
</comment>
<comment type="subcellular location">
    <subcellularLocation>
        <location evidence="2">Nucleus</location>
    </subcellularLocation>
</comment>
<comment type="tissue specificity">
    <text evidence="6">Developing CNS and PNS at embryonic and postnatal stages.</text>
</comment>
<comment type="developmental stage">
    <text evidence="6">It is first observed after neurulation, in 10.5 dpc rat embryos, and is restricted to subsets of neuroepithelial cells in the spinal cord and the brain, between 10.5 dpc and 13.5 dpc. In the periphery, its expression is restricted to some lineages of neural crest-derived cells, namely in sympathetic and enteric neural precursors. In the PNS its expression is extinguished at or before differentiation.</text>
</comment>
<reference key="1">
    <citation type="journal article" date="1990" name="Nature">
        <title>Two rat homologues of Drosophila achaete-scute specifically expressed in neuronal precursors.</title>
        <authorList>
            <person name="Johnson J.E."/>
            <person name="Birren S.J."/>
            <person name="Anderson D.J."/>
        </authorList>
    </citation>
    <scope>NUCLEOTIDE SEQUENCE [MRNA]</scope>
    <scope>TISSUE SPECIFICITY</scope>
    <scope>DEVELOPMENTAL STAGE</scope>
    <source>
        <strain>Sprague-Dawley</strain>
    </source>
</reference>
<reference key="2">
    <citation type="journal article" date="2000" name="Development">
        <title>Generation of neurons by transient expression of neural bHLH proteins in mammalian cells.</title>
        <authorList>
            <person name="Farah M.H."/>
            <person name="Olson J.M."/>
            <person name="Sucic H.B."/>
            <person name="Hume R.I."/>
            <person name="Tapscott S.J."/>
            <person name="Turner D.L."/>
        </authorList>
    </citation>
    <scope>FUNCTION</scope>
</reference>
<gene>
    <name type="primary">Ascl1</name>
    <name type="synonym">Ash1</name>
    <name type="synonym">Mash-1</name>
</gene>
<evidence type="ECO:0000250" key="1">
    <source>
        <dbReference type="UniProtKB" id="P50553"/>
    </source>
</evidence>
<evidence type="ECO:0000250" key="2">
    <source>
        <dbReference type="UniProtKB" id="Q02067"/>
    </source>
</evidence>
<evidence type="ECO:0000255" key="3">
    <source>
        <dbReference type="PROSITE-ProRule" id="PRU00981"/>
    </source>
</evidence>
<evidence type="ECO:0000256" key="4">
    <source>
        <dbReference type="SAM" id="MobiDB-lite"/>
    </source>
</evidence>
<evidence type="ECO:0000269" key="5">
    <source>
    </source>
</evidence>
<evidence type="ECO:0000269" key="6">
    <source>
    </source>
</evidence>
<accession>P19359</accession>
<name>ASCL1_RAT</name>